<organism evidence="7">
    <name type="scientific">Arabidopsis thaliana</name>
    <name type="common">Mouse-ear cress</name>
    <dbReference type="NCBI Taxonomy" id="3702"/>
    <lineage>
        <taxon>Eukaryota</taxon>
        <taxon>Viridiplantae</taxon>
        <taxon>Streptophyta</taxon>
        <taxon>Embryophyta</taxon>
        <taxon>Tracheophyta</taxon>
        <taxon>Spermatophyta</taxon>
        <taxon>Magnoliopsida</taxon>
        <taxon>eudicotyledons</taxon>
        <taxon>Gunneridae</taxon>
        <taxon>Pentapetalae</taxon>
        <taxon>rosids</taxon>
        <taxon>malvids</taxon>
        <taxon>Brassicales</taxon>
        <taxon>Brassicaceae</taxon>
        <taxon>Camelineae</taxon>
        <taxon>Arabidopsis</taxon>
    </lineage>
</organism>
<comment type="function">
    <text evidence="2">Probable inactive paralog of AtUNG (AC Q9LIH6) generated by a gene duplication event and subsequently disrupted by at least two transposon insertions.</text>
</comment>
<comment type="subcellular location">
    <subcellularLocation>
        <location evidence="1">Mitochondrion</location>
    </subcellularLocation>
</comment>
<comment type="similarity">
    <text evidence="4">Belongs to the uracil-DNA glycosylase (UDG) superfamily. UNG family.</text>
</comment>
<gene>
    <name evidence="5" type="ordered locus">At2g10550</name>
    <name evidence="6" type="ORF">T4D8.4</name>
</gene>
<accession>Q9SI87</accession>
<dbReference type="EMBL" id="AC007188">
    <property type="protein sequence ID" value="AAD28673.1"/>
    <property type="molecule type" value="Genomic_DNA"/>
</dbReference>
<dbReference type="EMBL" id="CP002685">
    <property type="protein sequence ID" value="AEC06148.1"/>
    <property type="molecule type" value="Genomic_DNA"/>
</dbReference>
<dbReference type="PIR" id="C84492">
    <property type="entry name" value="C84492"/>
</dbReference>
<dbReference type="RefSeq" id="NP_178849.1">
    <property type="nucleotide sequence ID" value="NM_126808.1"/>
</dbReference>
<dbReference type="STRING" id="3702.Q9SI87"/>
<dbReference type="iPTMnet" id="Q9SI87"/>
<dbReference type="PaxDb" id="3702-AT2G10550.1"/>
<dbReference type="EnsemblPlants" id="AT2G10550.1">
    <property type="protein sequence ID" value="AT2G10550.1"/>
    <property type="gene ID" value="AT2G10550"/>
</dbReference>
<dbReference type="GeneID" id="815515"/>
<dbReference type="Gramene" id="AT2G10550.1">
    <property type="protein sequence ID" value="AT2G10550.1"/>
    <property type="gene ID" value="AT2G10550"/>
</dbReference>
<dbReference type="KEGG" id="ath:AT2G10550"/>
<dbReference type="Araport" id="AT2G10550"/>
<dbReference type="TAIR" id="AT2G10550"/>
<dbReference type="HOGENOM" id="CLU_1572796_0_0_1"/>
<dbReference type="InParanoid" id="Q9SI87"/>
<dbReference type="PhylomeDB" id="Q9SI87"/>
<dbReference type="PRO" id="PR:Q9SI87"/>
<dbReference type="Proteomes" id="UP000006548">
    <property type="component" value="Chromosome 2"/>
</dbReference>
<dbReference type="ExpressionAtlas" id="Q9SI87">
    <property type="expression patterns" value="baseline"/>
</dbReference>
<dbReference type="GO" id="GO:0005739">
    <property type="term" value="C:mitochondrion"/>
    <property type="evidence" value="ECO:0007669"/>
    <property type="project" value="UniProtKB-SubCell"/>
</dbReference>
<proteinExistence type="inferred from homology"/>
<keyword id="KW-0496">Mitochondrion</keyword>
<keyword id="KW-1185">Reference proteome</keyword>
<keyword id="KW-0809">Transit peptide</keyword>
<sequence length="170" mass="18494">MALSTPKTLMDFFQPAKRLKASPSSSSSFPAVSVAGRSRDLGSVANSPPRVTVTTAVADDSSGLTPEQVARAEFHKFVAKSKSNLAVCSVKVTKAKGLILIMDLVKLWVYPSMCLKEKSPSSLLNIFKELHKDVGDKLHMVYFRRNKKENVSHVTSLAVEDVTGITRTKG</sequence>
<name>UNGI_ARATH</name>
<feature type="transit peptide" description="Mitochondrion" evidence="1">
    <location>
        <begin position="1"/>
        <end position="53"/>
    </location>
</feature>
<feature type="chain" id="PRO_0000433480" description="Probable inactive uracil-DNA glycosylase, mitochondrial" evidence="1">
    <location>
        <begin position="54"/>
        <end position="170"/>
    </location>
</feature>
<reference key="1">
    <citation type="journal article" date="1999" name="Nature">
        <title>Sequence and analysis of chromosome 2 of the plant Arabidopsis thaliana.</title>
        <authorList>
            <person name="Lin X."/>
            <person name="Kaul S."/>
            <person name="Rounsley S.D."/>
            <person name="Shea T.P."/>
            <person name="Benito M.-I."/>
            <person name="Town C.D."/>
            <person name="Fujii C.Y."/>
            <person name="Mason T.M."/>
            <person name="Bowman C.L."/>
            <person name="Barnstead M.E."/>
            <person name="Feldblyum T.V."/>
            <person name="Buell C.R."/>
            <person name="Ketchum K.A."/>
            <person name="Lee J.J."/>
            <person name="Ronning C.M."/>
            <person name="Koo H.L."/>
            <person name="Moffat K.S."/>
            <person name="Cronin L.A."/>
            <person name="Shen M."/>
            <person name="Pai G."/>
            <person name="Van Aken S."/>
            <person name="Umayam L."/>
            <person name="Tallon L.J."/>
            <person name="Gill J.E."/>
            <person name="Adams M.D."/>
            <person name="Carrera A.J."/>
            <person name="Creasy T.H."/>
            <person name="Goodman H.M."/>
            <person name="Somerville C.R."/>
            <person name="Copenhaver G.P."/>
            <person name="Preuss D."/>
            <person name="Nierman W.C."/>
            <person name="White O."/>
            <person name="Eisen J.A."/>
            <person name="Salzberg S.L."/>
            <person name="Fraser C.M."/>
            <person name="Venter J.C."/>
        </authorList>
    </citation>
    <scope>NUCLEOTIDE SEQUENCE [LARGE SCALE GENOMIC DNA]</scope>
    <source>
        <strain>cv. Columbia</strain>
    </source>
</reference>
<reference key="2">
    <citation type="journal article" date="2017" name="Plant J.">
        <title>Araport11: a complete reannotation of the Arabidopsis thaliana reference genome.</title>
        <authorList>
            <person name="Cheng C.Y."/>
            <person name="Krishnakumar V."/>
            <person name="Chan A.P."/>
            <person name="Thibaud-Nissen F."/>
            <person name="Schobel S."/>
            <person name="Town C.D."/>
        </authorList>
    </citation>
    <scope>GENOME REANNOTATION</scope>
    <source>
        <strain>cv. Columbia</strain>
    </source>
</reference>
<reference key="3">
    <citation type="journal article" date="2010" name="J. Biol. Chem.">
        <title>Arabidopsis uracil DNA glycosylase (UNG) is required for base excision repair of uracil and increases plant sensitivity to 5-fluorouracil.</title>
        <authorList>
            <person name="Cordoba-Canero D."/>
            <person name="Dubois E."/>
            <person name="Ariza R.R."/>
            <person name="Doutriaux M.P."/>
            <person name="Roldan-Arjona T."/>
        </authorList>
    </citation>
    <scope>FUNCTION</scope>
    <scope>IDENTIFICATION</scope>
</reference>
<protein>
    <recommendedName>
        <fullName evidence="3">Probable inactive uracil-DNA glycosylase, mitochondrial</fullName>
    </recommendedName>
</protein>
<evidence type="ECO:0000255" key="1"/>
<evidence type="ECO:0000269" key="2">
    <source>
    </source>
</evidence>
<evidence type="ECO:0000303" key="3">
    <source>
    </source>
</evidence>
<evidence type="ECO:0000305" key="4"/>
<evidence type="ECO:0000312" key="5">
    <source>
        <dbReference type="Araport" id="AT2G10550"/>
    </source>
</evidence>
<evidence type="ECO:0000312" key="6">
    <source>
        <dbReference type="EMBL" id="AAD28673.1"/>
    </source>
</evidence>
<evidence type="ECO:0000312" key="7">
    <source>
        <dbReference type="Proteomes" id="UP000006548"/>
    </source>
</evidence>